<gene>
    <name type="ordered locus">MJ0553</name>
</gene>
<accession>Q57973</accession>
<feature type="chain" id="PRO_0000158562" description="Acylphosphatase-like protein MJ0553">
    <location>
        <begin position="1"/>
        <end position="153"/>
    </location>
</feature>
<feature type="domain" description="Acylphosphatase-like" evidence="1">
    <location>
        <begin position="4"/>
        <end position="102"/>
    </location>
</feature>
<proteinExistence type="predicted"/>
<dbReference type="EMBL" id="L77117">
    <property type="protein sequence ID" value="AAB98549.1"/>
    <property type="molecule type" value="Genomic_DNA"/>
</dbReference>
<dbReference type="PIR" id="A64369">
    <property type="entry name" value="A64369"/>
</dbReference>
<dbReference type="RefSeq" id="WP_010870057.1">
    <property type="nucleotide sequence ID" value="NC_000909.1"/>
</dbReference>
<dbReference type="SMR" id="Q57973"/>
<dbReference type="STRING" id="243232.MJ_0553"/>
<dbReference type="PaxDb" id="243232-MJ_0553"/>
<dbReference type="EnsemblBacteria" id="AAB98549">
    <property type="protein sequence ID" value="AAB98549"/>
    <property type="gene ID" value="MJ_0553"/>
</dbReference>
<dbReference type="GeneID" id="1451418"/>
<dbReference type="KEGG" id="mja:MJ_0553"/>
<dbReference type="eggNOG" id="arCOG01674">
    <property type="taxonomic scope" value="Archaea"/>
</dbReference>
<dbReference type="HOGENOM" id="CLU_1656874_0_0_2"/>
<dbReference type="InParanoid" id="Q57973"/>
<dbReference type="OrthoDB" id="6643at2157"/>
<dbReference type="PhylomeDB" id="Q57973"/>
<dbReference type="Proteomes" id="UP000000805">
    <property type="component" value="Chromosome"/>
</dbReference>
<dbReference type="GO" id="GO:0003998">
    <property type="term" value="F:acylphosphatase activity"/>
    <property type="evidence" value="ECO:0007669"/>
    <property type="project" value="InterPro"/>
</dbReference>
<dbReference type="Gene3D" id="3.30.70.100">
    <property type="match status" value="1"/>
</dbReference>
<dbReference type="InterPro" id="IPR020456">
    <property type="entry name" value="Acylphosphatase"/>
</dbReference>
<dbReference type="InterPro" id="IPR001792">
    <property type="entry name" value="Acylphosphatase-like_dom"/>
</dbReference>
<dbReference type="InterPro" id="IPR036046">
    <property type="entry name" value="Acylphosphatase-like_dom_sf"/>
</dbReference>
<dbReference type="InterPro" id="IPR017968">
    <property type="entry name" value="Acylphosphatase_CS"/>
</dbReference>
<dbReference type="PANTHER" id="PTHR47268">
    <property type="entry name" value="ACYLPHOSPHATASE"/>
    <property type="match status" value="1"/>
</dbReference>
<dbReference type="PANTHER" id="PTHR47268:SF4">
    <property type="entry name" value="ACYLPHOSPHATASE"/>
    <property type="match status" value="1"/>
</dbReference>
<dbReference type="Pfam" id="PF00708">
    <property type="entry name" value="Acylphosphatase"/>
    <property type="match status" value="1"/>
</dbReference>
<dbReference type="SUPFAM" id="SSF54975">
    <property type="entry name" value="Acylphosphatase/BLUF domain-like"/>
    <property type="match status" value="1"/>
</dbReference>
<dbReference type="PROSITE" id="PS00150">
    <property type="entry name" value="ACYLPHOSPHATASE_1"/>
    <property type="match status" value="1"/>
</dbReference>
<dbReference type="PROSITE" id="PS51160">
    <property type="entry name" value="ACYLPHOSPHATASE_3"/>
    <property type="match status" value="1"/>
</dbReference>
<keyword id="KW-1185">Reference proteome</keyword>
<name>Y553_METJA</name>
<sequence length="153" mass="17880">MITTYELIIYGRVQHVGFRDRIEHIGRGLGISGVVYNHKDGTVRILANFDDEEIKELFKKSIKALEKKDKLIKIEKIEEKELNAYIEFPEGISRLSSDDILELNKKLDEGVKYIKLIFSELEEHKKILLDIKDTQIKTIKVLNEIKELLEKKL</sequence>
<organism>
    <name type="scientific">Methanocaldococcus jannaschii (strain ATCC 43067 / DSM 2661 / JAL-1 / JCM 10045 / NBRC 100440)</name>
    <name type="common">Methanococcus jannaschii</name>
    <dbReference type="NCBI Taxonomy" id="243232"/>
    <lineage>
        <taxon>Archaea</taxon>
        <taxon>Methanobacteriati</taxon>
        <taxon>Methanobacteriota</taxon>
        <taxon>Methanomada group</taxon>
        <taxon>Methanococci</taxon>
        <taxon>Methanococcales</taxon>
        <taxon>Methanocaldococcaceae</taxon>
        <taxon>Methanocaldococcus</taxon>
    </lineage>
</organism>
<protein>
    <recommendedName>
        <fullName>Acylphosphatase-like protein MJ0553</fullName>
    </recommendedName>
</protein>
<reference key="1">
    <citation type="journal article" date="1996" name="Science">
        <title>Complete genome sequence of the methanogenic archaeon, Methanococcus jannaschii.</title>
        <authorList>
            <person name="Bult C.J."/>
            <person name="White O."/>
            <person name="Olsen G.J."/>
            <person name="Zhou L."/>
            <person name="Fleischmann R.D."/>
            <person name="Sutton G.G."/>
            <person name="Blake J.A."/>
            <person name="FitzGerald L.M."/>
            <person name="Clayton R.A."/>
            <person name="Gocayne J.D."/>
            <person name="Kerlavage A.R."/>
            <person name="Dougherty B.A."/>
            <person name="Tomb J.-F."/>
            <person name="Adams M.D."/>
            <person name="Reich C.I."/>
            <person name="Overbeek R."/>
            <person name="Kirkness E.F."/>
            <person name="Weinstock K.G."/>
            <person name="Merrick J.M."/>
            <person name="Glodek A."/>
            <person name="Scott J.L."/>
            <person name="Geoghagen N.S.M."/>
            <person name="Weidman J.F."/>
            <person name="Fuhrmann J.L."/>
            <person name="Nguyen D."/>
            <person name="Utterback T.R."/>
            <person name="Kelley J.M."/>
            <person name="Peterson J.D."/>
            <person name="Sadow P.W."/>
            <person name="Hanna M.C."/>
            <person name="Cotton M.D."/>
            <person name="Roberts K.M."/>
            <person name="Hurst M.A."/>
            <person name="Kaine B.P."/>
            <person name="Borodovsky M."/>
            <person name="Klenk H.-P."/>
            <person name="Fraser C.M."/>
            <person name="Smith H.O."/>
            <person name="Woese C.R."/>
            <person name="Venter J.C."/>
        </authorList>
    </citation>
    <scope>NUCLEOTIDE SEQUENCE [LARGE SCALE GENOMIC DNA]</scope>
    <source>
        <strain>ATCC 43067 / DSM 2661 / JAL-1 / JCM 10045 / NBRC 100440</strain>
    </source>
</reference>
<evidence type="ECO:0000255" key="1">
    <source>
        <dbReference type="PROSITE-ProRule" id="PRU00520"/>
    </source>
</evidence>